<feature type="chain" id="PRO_1000114432" description="Small ribosomal subunit protein bS18">
    <location>
        <begin position="1"/>
        <end position="76"/>
    </location>
</feature>
<accession>B4RMH8</accession>
<dbReference type="EMBL" id="CP001050">
    <property type="protein sequence ID" value="ACF30012.1"/>
    <property type="molecule type" value="Genomic_DNA"/>
</dbReference>
<dbReference type="RefSeq" id="WP_002213306.1">
    <property type="nucleotide sequence ID" value="NC_011035.1"/>
</dbReference>
<dbReference type="SMR" id="B4RMH8"/>
<dbReference type="GeneID" id="93385879"/>
<dbReference type="KEGG" id="ngk:NGK_1338"/>
<dbReference type="HOGENOM" id="CLU_148710_2_2_4"/>
<dbReference type="Proteomes" id="UP000002564">
    <property type="component" value="Chromosome"/>
</dbReference>
<dbReference type="GO" id="GO:0022627">
    <property type="term" value="C:cytosolic small ribosomal subunit"/>
    <property type="evidence" value="ECO:0007669"/>
    <property type="project" value="TreeGrafter"/>
</dbReference>
<dbReference type="GO" id="GO:0070181">
    <property type="term" value="F:small ribosomal subunit rRNA binding"/>
    <property type="evidence" value="ECO:0007669"/>
    <property type="project" value="TreeGrafter"/>
</dbReference>
<dbReference type="GO" id="GO:0003735">
    <property type="term" value="F:structural constituent of ribosome"/>
    <property type="evidence" value="ECO:0007669"/>
    <property type="project" value="InterPro"/>
</dbReference>
<dbReference type="GO" id="GO:0006412">
    <property type="term" value="P:translation"/>
    <property type="evidence" value="ECO:0007669"/>
    <property type="project" value="UniProtKB-UniRule"/>
</dbReference>
<dbReference type="FunFam" id="4.10.640.10:FF:000001">
    <property type="entry name" value="30S ribosomal protein S18"/>
    <property type="match status" value="1"/>
</dbReference>
<dbReference type="Gene3D" id="4.10.640.10">
    <property type="entry name" value="Ribosomal protein S18"/>
    <property type="match status" value="1"/>
</dbReference>
<dbReference type="HAMAP" id="MF_00270">
    <property type="entry name" value="Ribosomal_bS18"/>
    <property type="match status" value="1"/>
</dbReference>
<dbReference type="InterPro" id="IPR001648">
    <property type="entry name" value="Ribosomal_bS18"/>
</dbReference>
<dbReference type="InterPro" id="IPR018275">
    <property type="entry name" value="Ribosomal_bS18_CS"/>
</dbReference>
<dbReference type="InterPro" id="IPR036870">
    <property type="entry name" value="Ribosomal_bS18_sf"/>
</dbReference>
<dbReference type="NCBIfam" id="TIGR00165">
    <property type="entry name" value="S18"/>
    <property type="match status" value="1"/>
</dbReference>
<dbReference type="PANTHER" id="PTHR13479">
    <property type="entry name" value="30S RIBOSOMAL PROTEIN S18"/>
    <property type="match status" value="1"/>
</dbReference>
<dbReference type="PANTHER" id="PTHR13479:SF40">
    <property type="entry name" value="SMALL RIBOSOMAL SUBUNIT PROTEIN BS18M"/>
    <property type="match status" value="1"/>
</dbReference>
<dbReference type="Pfam" id="PF01084">
    <property type="entry name" value="Ribosomal_S18"/>
    <property type="match status" value="1"/>
</dbReference>
<dbReference type="PRINTS" id="PR00974">
    <property type="entry name" value="RIBOSOMALS18"/>
</dbReference>
<dbReference type="SUPFAM" id="SSF46911">
    <property type="entry name" value="Ribosomal protein S18"/>
    <property type="match status" value="1"/>
</dbReference>
<dbReference type="PROSITE" id="PS00057">
    <property type="entry name" value="RIBOSOMAL_S18"/>
    <property type="match status" value="1"/>
</dbReference>
<gene>
    <name evidence="1" type="primary">rpsR</name>
    <name type="ordered locus">NGK_1338</name>
</gene>
<comment type="function">
    <text evidence="1">Binds as a heterodimer with protein bS6 to the central domain of the 16S rRNA, where it helps stabilize the platform of the 30S subunit.</text>
</comment>
<comment type="subunit">
    <text evidence="1">Part of the 30S ribosomal subunit. Forms a tight heterodimer with protein bS6.</text>
</comment>
<comment type="similarity">
    <text evidence="1">Belongs to the bacterial ribosomal protein bS18 family.</text>
</comment>
<sequence length="76" mass="8993">MARQSFKRRKFCRFTAEKIQEVDYKQVDLLKDFISENGKIIPARITGTKAFYQRQLAVAVKRARFLALLPYTDQHK</sequence>
<protein>
    <recommendedName>
        <fullName evidence="1">Small ribosomal subunit protein bS18</fullName>
    </recommendedName>
    <alternativeName>
        <fullName evidence="2">30S ribosomal protein S18</fullName>
    </alternativeName>
</protein>
<evidence type="ECO:0000255" key="1">
    <source>
        <dbReference type="HAMAP-Rule" id="MF_00270"/>
    </source>
</evidence>
<evidence type="ECO:0000305" key="2"/>
<organism>
    <name type="scientific">Neisseria gonorrhoeae (strain NCCP11945)</name>
    <dbReference type="NCBI Taxonomy" id="521006"/>
    <lineage>
        <taxon>Bacteria</taxon>
        <taxon>Pseudomonadati</taxon>
        <taxon>Pseudomonadota</taxon>
        <taxon>Betaproteobacteria</taxon>
        <taxon>Neisseriales</taxon>
        <taxon>Neisseriaceae</taxon>
        <taxon>Neisseria</taxon>
    </lineage>
</organism>
<keyword id="KW-0687">Ribonucleoprotein</keyword>
<keyword id="KW-0689">Ribosomal protein</keyword>
<keyword id="KW-0694">RNA-binding</keyword>
<keyword id="KW-0699">rRNA-binding</keyword>
<proteinExistence type="inferred from homology"/>
<reference key="1">
    <citation type="journal article" date="2008" name="J. Bacteriol.">
        <title>Complete genome sequence of Neisseria gonorrhoeae NCCP11945.</title>
        <authorList>
            <person name="Chung G.T."/>
            <person name="Yoo J.S."/>
            <person name="Oh H.B."/>
            <person name="Lee Y.S."/>
            <person name="Cha S.H."/>
            <person name="Kim S.J."/>
            <person name="Yoo C.K."/>
        </authorList>
    </citation>
    <scope>NUCLEOTIDE SEQUENCE [LARGE SCALE GENOMIC DNA]</scope>
    <source>
        <strain>NCCP11945</strain>
    </source>
</reference>
<name>RS18_NEIG2</name>